<reference key="1">
    <citation type="journal article" date="2009" name="PLoS Genet.">
        <title>Organised genome dynamics in the Escherichia coli species results in highly diverse adaptive paths.</title>
        <authorList>
            <person name="Touchon M."/>
            <person name="Hoede C."/>
            <person name="Tenaillon O."/>
            <person name="Barbe V."/>
            <person name="Baeriswyl S."/>
            <person name="Bidet P."/>
            <person name="Bingen E."/>
            <person name="Bonacorsi S."/>
            <person name="Bouchier C."/>
            <person name="Bouvet O."/>
            <person name="Calteau A."/>
            <person name="Chiapello H."/>
            <person name="Clermont O."/>
            <person name="Cruveiller S."/>
            <person name="Danchin A."/>
            <person name="Diard M."/>
            <person name="Dossat C."/>
            <person name="Karoui M.E."/>
            <person name="Frapy E."/>
            <person name="Garry L."/>
            <person name="Ghigo J.M."/>
            <person name="Gilles A.M."/>
            <person name="Johnson J."/>
            <person name="Le Bouguenec C."/>
            <person name="Lescat M."/>
            <person name="Mangenot S."/>
            <person name="Martinez-Jehanne V."/>
            <person name="Matic I."/>
            <person name="Nassif X."/>
            <person name="Oztas S."/>
            <person name="Petit M.A."/>
            <person name="Pichon C."/>
            <person name="Rouy Z."/>
            <person name="Ruf C.S."/>
            <person name="Schneider D."/>
            <person name="Tourret J."/>
            <person name="Vacherie B."/>
            <person name="Vallenet D."/>
            <person name="Medigue C."/>
            <person name="Rocha E.P.C."/>
            <person name="Denamur E."/>
        </authorList>
    </citation>
    <scope>NUCLEOTIDE SEQUENCE [LARGE SCALE GENOMIC DNA]</scope>
    <source>
        <strain>IAI1</strain>
    </source>
</reference>
<organism>
    <name type="scientific">Escherichia coli O8 (strain IAI1)</name>
    <dbReference type="NCBI Taxonomy" id="585034"/>
    <lineage>
        <taxon>Bacteria</taxon>
        <taxon>Pseudomonadati</taxon>
        <taxon>Pseudomonadota</taxon>
        <taxon>Gammaproteobacteria</taxon>
        <taxon>Enterobacterales</taxon>
        <taxon>Enterobacteriaceae</taxon>
        <taxon>Escherichia</taxon>
    </lineage>
</organism>
<accession>B7M213</accession>
<sequence length="155" mass="17597">MLKQVEIFTDGSCLGNPGPGGYGAILRYRGREKTFSAGYTRTTNNRMELMAAIVALEALKEHCEVILSTDSQYVRQGITQWIHNWKKRGWKTADKKPVKNVDLWQRLDAALGQHQIKWEWVKGHAGHPENERCDELARAAAMNPTLEDTGYQVEV</sequence>
<comment type="function">
    <text evidence="1">Endonuclease that specifically degrades the RNA of RNA-DNA hybrids.</text>
</comment>
<comment type="catalytic activity">
    <reaction evidence="1">
        <text>Endonucleolytic cleavage to 5'-phosphomonoester.</text>
        <dbReference type="EC" id="3.1.26.4"/>
    </reaction>
</comment>
<comment type="cofactor">
    <cofactor evidence="1">
        <name>Mg(2+)</name>
        <dbReference type="ChEBI" id="CHEBI:18420"/>
    </cofactor>
    <text evidence="1">Binds 1 Mg(2+) ion per subunit. May bind a second metal ion at a regulatory site, or after substrate binding.</text>
</comment>
<comment type="subunit">
    <text evidence="1">Monomer.</text>
</comment>
<comment type="subcellular location">
    <subcellularLocation>
        <location evidence="1">Cytoplasm</location>
    </subcellularLocation>
</comment>
<comment type="similarity">
    <text evidence="1">Belongs to the RNase H family.</text>
</comment>
<feature type="chain" id="PRO_1000116579" description="Ribonuclease H">
    <location>
        <begin position="1"/>
        <end position="155"/>
    </location>
</feature>
<feature type="domain" description="RNase H type-1" evidence="2">
    <location>
        <begin position="1"/>
        <end position="142"/>
    </location>
</feature>
<feature type="binding site" evidence="1">
    <location>
        <position position="10"/>
    </location>
    <ligand>
        <name>Mg(2+)</name>
        <dbReference type="ChEBI" id="CHEBI:18420"/>
        <label>1</label>
    </ligand>
</feature>
<feature type="binding site" evidence="1">
    <location>
        <position position="10"/>
    </location>
    <ligand>
        <name>Mg(2+)</name>
        <dbReference type="ChEBI" id="CHEBI:18420"/>
        <label>2</label>
    </ligand>
</feature>
<feature type="binding site" evidence="1">
    <location>
        <position position="48"/>
    </location>
    <ligand>
        <name>Mg(2+)</name>
        <dbReference type="ChEBI" id="CHEBI:18420"/>
        <label>1</label>
    </ligand>
</feature>
<feature type="binding site" evidence="1">
    <location>
        <position position="70"/>
    </location>
    <ligand>
        <name>Mg(2+)</name>
        <dbReference type="ChEBI" id="CHEBI:18420"/>
        <label>1</label>
    </ligand>
</feature>
<feature type="binding site" evidence="1">
    <location>
        <position position="134"/>
    </location>
    <ligand>
        <name>Mg(2+)</name>
        <dbReference type="ChEBI" id="CHEBI:18420"/>
        <label>2</label>
    </ligand>
</feature>
<dbReference type="EC" id="3.1.26.4" evidence="1"/>
<dbReference type="EMBL" id="CU928160">
    <property type="protein sequence ID" value="CAQ97097.1"/>
    <property type="molecule type" value="Genomic_DNA"/>
</dbReference>
<dbReference type="RefSeq" id="WP_000917883.1">
    <property type="nucleotide sequence ID" value="NC_011741.1"/>
</dbReference>
<dbReference type="SMR" id="B7M213"/>
<dbReference type="GeneID" id="93777209"/>
<dbReference type="KEGG" id="ecr:ECIAI1_0222"/>
<dbReference type="HOGENOM" id="CLU_030894_6_0_6"/>
<dbReference type="GO" id="GO:0005737">
    <property type="term" value="C:cytoplasm"/>
    <property type="evidence" value="ECO:0007669"/>
    <property type="project" value="UniProtKB-SubCell"/>
</dbReference>
<dbReference type="GO" id="GO:0000287">
    <property type="term" value="F:magnesium ion binding"/>
    <property type="evidence" value="ECO:0007669"/>
    <property type="project" value="UniProtKB-UniRule"/>
</dbReference>
<dbReference type="GO" id="GO:0003676">
    <property type="term" value="F:nucleic acid binding"/>
    <property type="evidence" value="ECO:0007669"/>
    <property type="project" value="InterPro"/>
</dbReference>
<dbReference type="GO" id="GO:0004523">
    <property type="term" value="F:RNA-DNA hybrid ribonuclease activity"/>
    <property type="evidence" value="ECO:0007669"/>
    <property type="project" value="UniProtKB-UniRule"/>
</dbReference>
<dbReference type="GO" id="GO:0043137">
    <property type="term" value="P:DNA replication, removal of RNA primer"/>
    <property type="evidence" value="ECO:0007669"/>
    <property type="project" value="TreeGrafter"/>
</dbReference>
<dbReference type="CDD" id="cd09278">
    <property type="entry name" value="RNase_HI_prokaryote_like"/>
    <property type="match status" value="1"/>
</dbReference>
<dbReference type="FunFam" id="3.30.420.10:FF:000008">
    <property type="entry name" value="Ribonuclease H"/>
    <property type="match status" value="1"/>
</dbReference>
<dbReference type="Gene3D" id="3.30.420.10">
    <property type="entry name" value="Ribonuclease H-like superfamily/Ribonuclease H"/>
    <property type="match status" value="1"/>
</dbReference>
<dbReference type="HAMAP" id="MF_00042">
    <property type="entry name" value="RNase_H"/>
    <property type="match status" value="1"/>
</dbReference>
<dbReference type="InterPro" id="IPR050092">
    <property type="entry name" value="RNase_H"/>
</dbReference>
<dbReference type="InterPro" id="IPR012337">
    <property type="entry name" value="RNaseH-like_sf"/>
</dbReference>
<dbReference type="InterPro" id="IPR002156">
    <property type="entry name" value="RNaseH_domain"/>
</dbReference>
<dbReference type="InterPro" id="IPR036397">
    <property type="entry name" value="RNaseH_sf"/>
</dbReference>
<dbReference type="InterPro" id="IPR022892">
    <property type="entry name" value="RNaseHI"/>
</dbReference>
<dbReference type="NCBIfam" id="NF001236">
    <property type="entry name" value="PRK00203.1"/>
    <property type="match status" value="1"/>
</dbReference>
<dbReference type="PANTHER" id="PTHR10642">
    <property type="entry name" value="RIBONUCLEASE H1"/>
    <property type="match status" value="1"/>
</dbReference>
<dbReference type="PANTHER" id="PTHR10642:SF26">
    <property type="entry name" value="RIBONUCLEASE H1"/>
    <property type="match status" value="1"/>
</dbReference>
<dbReference type="Pfam" id="PF00075">
    <property type="entry name" value="RNase_H"/>
    <property type="match status" value="1"/>
</dbReference>
<dbReference type="SUPFAM" id="SSF53098">
    <property type="entry name" value="Ribonuclease H-like"/>
    <property type="match status" value="1"/>
</dbReference>
<dbReference type="PROSITE" id="PS50879">
    <property type="entry name" value="RNASE_H_1"/>
    <property type="match status" value="1"/>
</dbReference>
<keyword id="KW-0963">Cytoplasm</keyword>
<keyword id="KW-0255">Endonuclease</keyword>
<keyword id="KW-0378">Hydrolase</keyword>
<keyword id="KW-0460">Magnesium</keyword>
<keyword id="KW-0479">Metal-binding</keyword>
<keyword id="KW-0540">Nuclease</keyword>
<gene>
    <name evidence="1" type="primary">rnhA</name>
    <name type="ordered locus">ECIAI1_0222</name>
</gene>
<evidence type="ECO:0000255" key="1">
    <source>
        <dbReference type="HAMAP-Rule" id="MF_00042"/>
    </source>
</evidence>
<evidence type="ECO:0000255" key="2">
    <source>
        <dbReference type="PROSITE-ProRule" id="PRU00408"/>
    </source>
</evidence>
<proteinExistence type="inferred from homology"/>
<name>RNH_ECO8A</name>
<protein>
    <recommendedName>
        <fullName evidence="1">Ribonuclease H</fullName>
        <shortName evidence="1">RNase H</shortName>
        <ecNumber evidence="1">3.1.26.4</ecNumber>
    </recommendedName>
</protein>